<dbReference type="EC" id="6.3.2.6" evidence="1"/>
<dbReference type="EMBL" id="CP000518">
    <property type="protein sequence ID" value="ABL93839.1"/>
    <property type="molecule type" value="Genomic_DNA"/>
</dbReference>
<dbReference type="SMR" id="A1ULY1"/>
<dbReference type="STRING" id="189918.Mkms_4648"/>
<dbReference type="KEGG" id="mkm:Mkms_4648"/>
<dbReference type="HOGENOM" id="CLU_045637_0_0_11"/>
<dbReference type="OrthoDB" id="9801549at2"/>
<dbReference type="UniPathway" id="UPA00074">
    <property type="reaction ID" value="UER00131"/>
</dbReference>
<dbReference type="GO" id="GO:0005737">
    <property type="term" value="C:cytoplasm"/>
    <property type="evidence" value="ECO:0007669"/>
    <property type="project" value="TreeGrafter"/>
</dbReference>
<dbReference type="GO" id="GO:0005524">
    <property type="term" value="F:ATP binding"/>
    <property type="evidence" value="ECO:0007669"/>
    <property type="project" value="UniProtKB-KW"/>
</dbReference>
<dbReference type="GO" id="GO:0004639">
    <property type="term" value="F:phosphoribosylaminoimidazolesuccinocarboxamide synthase activity"/>
    <property type="evidence" value="ECO:0007669"/>
    <property type="project" value="UniProtKB-UniRule"/>
</dbReference>
<dbReference type="GO" id="GO:0006189">
    <property type="term" value="P:'de novo' IMP biosynthetic process"/>
    <property type="evidence" value="ECO:0007669"/>
    <property type="project" value="UniProtKB-UniRule"/>
</dbReference>
<dbReference type="CDD" id="cd01414">
    <property type="entry name" value="SAICAR_synt_Sc"/>
    <property type="match status" value="1"/>
</dbReference>
<dbReference type="FunFam" id="3.30.200.20:FF:000199">
    <property type="entry name" value="Phosphoribosylaminoimidazole-succinocarboxamide synthase"/>
    <property type="match status" value="1"/>
</dbReference>
<dbReference type="FunFam" id="3.30.470.20:FF:000015">
    <property type="entry name" value="Phosphoribosylaminoimidazole-succinocarboxamide synthase"/>
    <property type="match status" value="1"/>
</dbReference>
<dbReference type="Gene3D" id="3.30.470.20">
    <property type="entry name" value="ATP-grasp fold, B domain"/>
    <property type="match status" value="1"/>
</dbReference>
<dbReference type="Gene3D" id="3.30.200.20">
    <property type="entry name" value="Phosphorylase Kinase, domain 1"/>
    <property type="match status" value="1"/>
</dbReference>
<dbReference type="HAMAP" id="MF_00137">
    <property type="entry name" value="SAICAR_synth"/>
    <property type="match status" value="1"/>
</dbReference>
<dbReference type="InterPro" id="IPR028923">
    <property type="entry name" value="SAICAR_synt/ADE2_N"/>
</dbReference>
<dbReference type="InterPro" id="IPR001636">
    <property type="entry name" value="SAICAR_synth"/>
</dbReference>
<dbReference type="InterPro" id="IPR018236">
    <property type="entry name" value="SAICAR_synthetase_CS"/>
</dbReference>
<dbReference type="NCBIfam" id="NF010568">
    <property type="entry name" value="PRK13961.1"/>
    <property type="match status" value="1"/>
</dbReference>
<dbReference type="NCBIfam" id="TIGR00081">
    <property type="entry name" value="purC"/>
    <property type="match status" value="1"/>
</dbReference>
<dbReference type="PANTHER" id="PTHR43700">
    <property type="entry name" value="PHOSPHORIBOSYLAMINOIMIDAZOLE-SUCCINOCARBOXAMIDE SYNTHASE"/>
    <property type="match status" value="1"/>
</dbReference>
<dbReference type="PANTHER" id="PTHR43700:SF1">
    <property type="entry name" value="PHOSPHORIBOSYLAMINOIMIDAZOLE-SUCCINOCARBOXAMIDE SYNTHASE"/>
    <property type="match status" value="1"/>
</dbReference>
<dbReference type="Pfam" id="PF01259">
    <property type="entry name" value="SAICAR_synt"/>
    <property type="match status" value="1"/>
</dbReference>
<dbReference type="SUPFAM" id="SSF56104">
    <property type="entry name" value="SAICAR synthase-like"/>
    <property type="match status" value="1"/>
</dbReference>
<dbReference type="PROSITE" id="PS01057">
    <property type="entry name" value="SAICAR_SYNTHETASE_1"/>
    <property type="match status" value="1"/>
</dbReference>
<dbReference type="PROSITE" id="PS01058">
    <property type="entry name" value="SAICAR_SYNTHETASE_2"/>
    <property type="match status" value="1"/>
</dbReference>
<proteinExistence type="inferred from homology"/>
<organism>
    <name type="scientific">Mycobacterium sp. (strain KMS)</name>
    <dbReference type="NCBI Taxonomy" id="189918"/>
    <lineage>
        <taxon>Bacteria</taxon>
        <taxon>Bacillati</taxon>
        <taxon>Actinomycetota</taxon>
        <taxon>Actinomycetes</taxon>
        <taxon>Mycobacteriales</taxon>
        <taxon>Mycobacteriaceae</taxon>
        <taxon>Mycobacterium</taxon>
    </lineage>
</organism>
<reference key="1">
    <citation type="submission" date="2006-12" db="EMBL/GenBank/DDBJ databases">
        <title>Complete sequence of chromosome of Mycobacterium sp. KMS.</title>
        <authorList>
            <consortium name="US DOE Joint Genome Institute"/>
            <person name="Copeland A."/>
            <person name="Lucas S."/>
            <person name="Lapidus A."/>
            <person name="Barry K."/>
            <person name="Detter J.C."/>
            <person name="Glavina del Rio T."/>
            <person name="Hammon N."/>
            <person name="Israni S."/>
            <person name="Dalin E."/>
            <person name="Tice H."/>
            <person name="Pitluck S."/>
            <person name="Kiss H."/>
            <person name="Brettin T."/>
            <person name="Bruce D."/>
            <person name="Han C."/>
            <person name="Tapia R."/>
            <person name="Gilna P."/>
            <person name="Schmutz J."/>
            <person name="Larimer F."/>
            <person name="Land M."/>
            <person name="Hauser L."/>
            <person name="Kyrpides N."/>
            <person name="Mikhailova N."/>
            <person name="Miller C.D."/>
            <person name="Richardson P."/>
        </authorList>
    </citation>
    <scope>NUCLEOTIDE SEQUENCE [LARGE SCALE GENOMIC DNA]</scope>
    <source>
        <strain>KMS</strain>
    </source>
</reference>
<sequence length="297" mass="32973">MRPALSDYRHLASGKVRELYRIDDEHLLFVATDRISAYDHILSSEIPDKGRILTAMSVFFFDLIDAPNHLAGPPDDPRIPEEVLGRALVVRQLEMLPVECVARGYLTGSGLIDYRKTGTLCGLTLPPGLTEASKFAEPLYTPASKAELGLHDENIDFAATVDLVGEKRAAQLRERTLQIYTQGADHALTKGIIIADTKFEFGVDPSGELVLADEVFTPDSSRYWYADAYREGQVQPSYDKQFVRNWLTGPESGWDRAADQPPPPLPAEIVDATRSRYIEAYERISGLSFAEWIGASA</sequence>
<comment type="catalytic activity">
    <reaction evidence="1">
        <text>5-amino-1-(5-phospho-D-ribosyl)imidazole-4-carboxylate + L-aspartate + ATP = (2S)-2-[5-amino-1-(5-phospho-beta-D-ribosyl)imidazole-4-carboxamido]succinate + ADP + phosphate + 2 H(+)</text>
        <dbReference type="Rhea" id="RHEA:22628"/>
        <dbReference type="ChEBI" id="CHEBI:15378"/>
        <dbReference type="ChEBI" id="CHEBI:29991"/>
        <dbReference type="ChEBI" id="CHEBI:30616"/>
        <dbReference type="ChEBI" id="CHEBI:43474"/>
        <dbReference type="ChEBI" id="CHEBI:58443"/>
        <dbReference type="ChEBI" id="CHEBI:77657"/>
        <dbReference type="ChEBI" id="CHEBI:456216"/>
        <dbReference type="EC" id="6.3.2.6"/>
    </reaction>
</comment>
<comment type="pathway">
    <text evidence="1">Purine metabolism; IMP biosynthesis via de novo pathway; 5-amino-1-(5-phospho-D-ribosyl)imidazole-4-carboxamide from 5-amino-1-(5-phospho-D-ribosyl)imidazole-4-carboxylate: step 1/2.</text>
</comment>
<comment type="similarity">
    <text evidence="1">Belongs to the SAICAR synthetase family.</text>
</comment>
<evidence type="ECO:0000255" key="1">
    <source>
        <dbReference type="HAMAP-Rule" id="MF_00137"/>
    </source>
</evidence>
<gene>
    <name evidence="1" type="primary">purC</name>
    <name type="ordered locus">Mkms_4648</name>
</gene>
<name>PUR7_MYCSK</name>
<accession>A1ULY1</accession>
<protein>
    <recommendedName>
        <fullName evidence="1">Phosphoribosylaminoimidazole-succinocarboxamide synthase</fullName>
        <ecNumber evidence="1">6.3.2.6</ecNumber>
    </recommendedName>
    <alternativeName>
        <fullName evidence="1">SAICAR synthetase</fullName>
    </alternativeName>
</protein>
<feature type="chain" id="PRO_1000018737" description="Phosphoribosylaminoimidazole-succinocarboxamide synthase">
    <location>
        <begin position="1"/>
        <end position="297"/>
    </location>
</feature>
<keyword id="KW-0067">ATP-binding</keyword>
<keyword id="KW-0436">Ligase</keyword>
<keyword id="KW-0547">Nucleotide-binding</keyword>
<keyword id="KW-0658">Purine biosynthesis</keyword>